<dbReference type="GO" id="GO:0005576">
    <property type="term" value="C:extracellular region"/>
    <property type="evidence" value="ECO:0007669"/>
    <property type="project" value="UniProtKB-SubCell"/>
</dbReference>
<dbReference type="GO" id="GO:0016020">
    <property type="term" value="C:membrane"/>
    <property type="evidence" value="ECO:0007669"/>
    <property type="project" value="UniProtKB-KW"/>
</dbReference>
<dbReference type="GO" id="GO:0044218">
    <property type="term" value="C:other organism cell membrane"/>
    <property type="evidence" value="ECO:0007669"/>
    <property type="project" value="UniProtKB-KW"/>
</dbReference>
<dbReference type="GO" id="GO:0098542">
    <property type="term" value="P:defense response to other organism"/>
    <property type="evidence" value="ECO:0007669"/>
    <property type="project" value="InterPro"/>
</dbReference>
<dbReference type="InterPro" id="IPR012523">
    <property type="entry name" value="Antimicrobial_4"/>
</dbReference>
<dbReference type="Pfam" id="PF08024">
    <property type="entry name" value="Antimicrobial_4"/>
    <property type="match status" value="1"/>
</dbReference>
<sequence length="23" mass="2503">FWGTLAKLALKAVPAVMGMIKKE</sequence>
<evidence type="ECO:0000269" key="1">
    <source>
    </source>
</evidence>
<evidence type="ECO:0000303" key="2">
    <source>
    </source>
</evidence>
<evidence type="ECO:0000303" key="3">
    <source>
    </source>
</evidence>
<evidence type="ECO:0000305" key="4"/>
<evidence type="ECO:0000305" key="5">
    <source>
    </source>
</evidence>
<protein>
    <recommendedName>
        <fullName evidence="3">U1-poneritoxin-Da3b</fullName>
        <shortName evidence="3">U1-PONTX-Da3b</shortName>
    </recommendedName>
    <alternativeName>
        <fullName evidence="2">Dinoponeratoxin Da-2501</fullName>
    </alternativeName>
    <alternativeName>
        <fullName evidence="4">Poneratoxin</fullName>
    </alternativeName>
    <component>
        <recommendedName>
            <fullName evidence="3">U1-poneritoxin-Da3a</fullName>
            <shortName evidence="3">U1-PONTX-Da3a</shortName>
        </recommendedName>
        <alternativeName>
            <fullName evidence="2">Dinoponeratoxin Da-1585</fullName>
        </alternativeName>
    </component>
</protein>
<proteinExistence type="evidence at protein level"/>
<feature type="peptide" id="PRO_0000393344" description="U1-poneritoxin-Da3b" evidence="1">
    <location>
        <begin position="1"/>
        <end position="23"/>
    </location>
</feature>
<feature type="peptide" id="PRO_0000393345" description="U1-poneritoxin-Da3a" evidence="1">
    <location>
        <begin position="9"/>
        <end position="23"/>
    </location>
</feature>
<keyword id="KW-0929">Antimicrobial</keyword>
<keyword id="KW-0903">Direct protein sequencing</keyword>
<keyword id="KW-0472">Membrane</keyword>
<keyword id="KW-0964">Secreted</keyword>
<keyword id="KW-1052">Target cell membrane</keyword>
<keyword id="KW-1053">Target membrane</keyword>
<accession>P0CF01</accession>
<comment type="function">
    <molecule>U1-poneritoxin-Da3b</molecule>
    <text evidence="4">May have antimicrobial properties, like most ant linear peptides. May act by disrupting the integrity of the bacterial cell membrane.</text>
</comment>
<comment type="function">
    <molecule>U1-poneritoxin-Da3a</molecule>
    <text evidence="4">May have antimicrobial properties, like most ant linear peptides. May act by disrupting the integrity of the bacterial cell membrane.</text>
</comment>
<comment type="subcellular location">
    <subcellularLocation>
        <location evidence="1">Secreted</location>
    </subcellularLocation>
    <subcellularLocation>
        <location evidence="4">Target cell membrane</location>
    </subcellularLocation>
</comment>
<comment type="tissue specificity">
    <text evidence="5">Expressed by the venom gland.</text>
</comment>
<comment type="mass spectrometry" mass="2501.4" method="Electrospray" evidence="1">
    <molecule>U1-poneritoxin-Da3b</molecule>
</comment>
<comment type="mass spectrometry" mass="1584.9" method="Electrospray" evidence="1">
    <molecule>U1-poneritoxin-Da3a</molecule>
</comment>
<comment type="similarity">
    <text evidence="4">Belongs to the non-disulfide-bridged peptide (NDBP) superfamily. Medium-length antimicrobial peptide (group 3) family. Ponericin-W subfamily.</text>
</comment>
<organism>
    <name type="scientific">Dinoponera australis</name>
    <name type="common">Giant neotropical hunting ant</name>
    <dbReference type="NCBI Taxonomy" id="609289"/>
    <lineage>
        <taxon>Eukaryota</taxon>
        <taxon>Metazoa</taxon>
        <taxon>Ecdysozoa</taxon>
        <taxon>Arthropoda</taxon>
        <taxon>Hexapoda</taxon>
        <taxon>Insecta</taxon>
        <taxon>Pterygota</taxon>
        <taxon>Neoptera</taxon>
        <taxon>Endopterygota</taxon>
        <taxon>Hymenoptera</taxon>
        <taxon>Apocrita</taxon>
        <taxon>Aculeata</taxon>
        <taxon>Formicoidea</taxon>
        <taxon>Formicidae</taxon>
        <taxon>Ponerinae</taxon>
        <taxon>Ponerini</taxon>
        <taxon>Dinoponera</taxon>
    </lineage>
</organism>
<reference key="1">
    <citation type="journal article" date="2010" name="Toxicon">
        <title>A biochemical characterization of the major peptides from the venom of the giant Neotropical hunting ant Dinoponera australis.</title>
        <authorList>
            <person name="Johnson S.R."/>
            <person name="Copello J.A."/>
            <person name="Evans M.S."/>
            <person name="Suarez A.V."/>
        </authorList>
    </citation>
    <scope>PROTEIN SEQUENCE</scope>
    <scope>MASS SPECTROMETRY</scope>
    <scope>SYNTHESIS</scope>
    <scope>SUBCELLULAR LOCATION</scope>
    <source>
        <tissue>Venom</tissue>
    </source>
</reference>
<reference key="2">
    <citation type="journal article" date="2016" name="Toxins">
        <title>The biochemical toxin arsenal from ant venoms.</title>
        <authorList>
            <person name="Touchard A."/>
            <person name="Aili S.R."/>
            <person name="Fox E.G."/>
            <person name="Escoubas P."/>
            <person name="Orivel J."/>
            <person name="Nicholson G.M."/>
            <person name="Dejean A."/>
        </authorList>
    </citation>
    <scope>REVIEW</scope>
    <scope>NOMENCLATURE</scope>
</reference>
<name>TX3AB_DINAS</name>